<accession>Q800L1</accession>
<evidence type="ECO:0000250" key="1"/>
<evidence type="ECO:0000250" key="2">
    <source>
        <dbReference type="UniProtKB" id="Q15526"/>
    </source>
</evidence>
<evidence type="ECO:0000255" key="3"/>
<evidence type="ECO:0000305" key="4"/>
<comment type="function">
    <text evidence="2">May play a role in mitochondrial respiratory chain complex IV assembly. Probably involved in the biogenesis of the COX complex.</text>
</comment>
<comment type="subcellular location">
    <subcellularLocation>
        <location evidence="1">Mitochondrion inner membrane</location>
    </subcellularLocation>
</comment>
<comment type="similarity">
    <text evidence="4">Belongs to the SURF1 family.</text>
</comment>
<dbReference type="EMBL" id="AB050009">
    <property type="protein sequence ID" value="BAC65170.1"/>
    <property type="molecule type" value="Genomic_DNA"/>
</dbReference>
<dbReference type="RefSeq" id="NP_001012671.1">
    <property type="nucleotide sequence ID" value="NM_001012653.3"/>
</dbReference>
<dbReference type="SMR" id="Q800L1"/>
<dbReference type="FunCoup" id="Q800L1">
    <property type="interactions" value="569"/>
</dbReference>
<dbReference type="STRING" id="9031.ENSGALP00000050296"/>
<dbReference type="PaxDb" id="9031-ENSGALP00000005047"/>
<dbReference type="Ensembl" id="ENSGALT00010069805.1">
    <property type="protein sequence ID" value="ENSGALP00010042931.1"/>
    <property type="gene ID" value="ENSGALG00010028859.1"/>
</dbReference>
<dbReference type="GeneID" id="417157"/>
<dbReference type="KEGG" id="gga:417157"/>
<dbReference type="CTD" id="6834"/>
<dbReference type="VEuPathDB" id="HostDB:geneid_417157"/>
<dbReference type="eggNOG" id="KOG1563">
    <property type="taxonomic scope" value="Eukaryota"/>
</dbReference>
<dbReference type="GeneTree" id="ENSGT00530000064194"/>
<dbReference type="HOGENOM" id="CLU_047737_4_0_1"/>
<dbReference type="InParanoid" id="Q800L1"/>
<dbReference type="OMA" id="WYSRDVA"/>
<dbReference type="OrthoDB" id="10040024at2759"/>
<dbReference type="PhylomeDB" id="Q800L1"/>
<dbReference type="TreeFam" id="TF314684"/>
<dbReference type="PRO" id="PR:Q800L1"/>
<dbReference type="Proteomes" id="UP000000539">
    <property type="component" value="Chromosome 17"/>
</dbReference>
<dbReference type="Bgee" id="ENSGALG00000033754">
    <property type="expression patterns" value="Expressed in heart and 13 other cell types or tissues"/>
</dbReference>
<dbReference type="GO" id="GO:0005743">
    <property type="term" value="C:mitochondrial inner membrane"/>
    <property type="evidence" value="ECO:0007669"/>
    <property type="project" value="UniProtKB-SubCell"/>
</dbReference>
<dbReference type="GO" id="GO:0005739">
    <property type="term" value="C:mitochondrion"/>
    <property type="evidence" value="ECO:0000318"/>
    <property type="project" value="GO_Central"/>
</dbReference>
<dbReference type="GO" id="GO:0004129">
    <property type="term" value="F:cytochrome-c oxidase activity"/>
    <property type="evidence" value="ECO:0007669"/>
    <property type="project" value="Ensembl"/>
</dbReference>
<dbReference type="GO" id="GO:0033617">
    <property type="term" value="P:mitochondrial cytochrome c oxidase assembly"/>
    <property type="evidence" value="ECO:0000250"/>
    <property type="project" value="UniProtKB"/>
</dbReference>
<dbReference type="CDD" id="cd06662">
    <property type="entry name" value="SURF1"/>
    <property type="match status" value="1"/>
</dbReference>
<dbReference type="InterPro" id="IPR002994">
    <property type="entry name" value="Surf1/Shy1"/>
</dbReference>
<dbReference type="InterPro" id="IPR045214">
    <property type="entry name" value="Surf1/Surf4"/>
</dbReference>
<dbReference type="PANTHER" id="PTHR23427">
    <property type="entry name" value="SURFEIT LOCUS PROTEIN"/>
    <property type="match status" value="1"/>
</dbReference>
<dbReference type="PANTHER" id="PTHR23427:SF2">
    <property type="entry name" value="SURFEIT LOCUS PROTEIN 1"/>
    <property type="match status" value="1"/>
</dbReference>
<dbReference type="Pfam" id="PF02104">
    <property type="entry name" value="SURF1"/>
    <property type="match status" value="1"/>
</dbReference>
<dbReference type="PROSITE" id="PS50895">
    <property type="entry name" value="SURF1"/>
    <property type="match status" value="1"/>
</dbReference>
<keyword id="KW-0472">Membrane</keyword>
<keyword id="KW-0496">Mitochondrion</keyword>
<keyword id="KW-0999">Mitochondrion inner membrane</keyword>
<keyword id="KW-1185">Reference proteome</keyword>
<keyword id="KW-0812">Transmembrane</keyword>
<keyword id="KW-1133">Transmembrane helix</keyword>
<reference key="1">
    <citation type="submission" date="2000-10" db="EMBL/GenBank/DDBJ databases">
        <title>The gene cluster containing ribosomal protein L7a gene of the chicken.</title>
        <authorList>
            <person name="Maeda N."/>
            <person name="Toku S."/>
            <person name="Kenmochi N."/>
            <person name="Tanaka T."/>
        </authorList>
    </citation>
    <scope>NUCLEOTIDE SEQUENCE [GENOMIC DNA]</scope>
    <source>
        <tissue>Liver</tissue>
    </source>
</reference>
<name>SURF1_CHICK</name>
<sequence>MATWGLLLRAGPRLLRERRARISHCLLRRTFFGFPRTKAGSAVTQQGDVCLRLCSPRSSTTATSAAGEDAWLKWGLLLVPLTAFCLGTWQIQRRKWKLDLIAQLASRLSSEPIPLTLDPMELKELEYRPVKVRGHFDHSKELYILPRSLVDPEREAREAGKLTSHAENGANVITPFYCTELGVTILVNRGFVPKKKLKPETRLKGQIEEEIDLTGVVRLSEKRKPFVPENNIEKNRWHYRDLEAMAKVTGAEPIFIDADFRSTVPGGPIGGQTRVSLRNEHMQYIVTWYGLCAATSFLWYRKFIQKIPL</sequence>
<protein>
    <recommendedName>
        <fullName>Surfeit locus protein 1</fullName>
    </recommendedName>
</protein>
<feature type="chain" id="PRO_0000215655" description="Surfeit locus protein 1">
    <location>
        <begin position="1"/>
        <end position="309"/>
    </location>
</feature>
<feature type="transmembrane region" description="Helical" evidence="3">
    <location>
        <begin position="71"/>
        <end position="89"/>
    </location>
</feature>
<feature type="transmembrane region" description="Helical" evidence="3">
    <location>
        <begin position="284"/>
        <end position="304"/>
    </location>
</feature>
<proteinExistence type="inferred from homology"/>
<gene>
    <name type="primary">SURF1</name>
    <name type="synonym">SURF-1</name>
</gene>
<organism>
    <name type="scientific">Gallus gallus</name>
    <name type="common">Chicken</name>
    <dbReference type="NCBI Taxonomy" id="9031"/>
    <lineage>
        <taxon>Eukaryota</taxon>
        <taxon>Metazoa</taxon>
        <taxon>Chordata</taxon>
        <taxon>Craniata</taxon>
        <taxon>Vertebrata</taxon>
        <taxon>Euteleostomi</taxon>
        <taxon>Archelosauria</taxon>
        <taxon>Archosauria</taxon>
        <taxon>Dinosauria</taxon>
        <taxon>Saurischia</taxon>
        <taxon>Theropoda</taxon>
        <taxon>Coelurosauria</taxon>
        <taxon>Aves</taxon>
        <taxon>Neognathae</taxon>
        <taxon>Galloanserae</taxon>
        <taxon>Galliformes</taxon>
        <taxon>Phasianidae</taxon>
        <taxon>Phasianinae</taxon>
        <taxon>Gallus</taxon>
    </lineage>
</organism>